<name>PSB_METTP</name>
<keyword id="KW-0068">Autocatalytic cleavage</keyword>
<keyword id="KW-0963">Cytoplasm</keyword>
<keyword id="KW-0378">Hydrolase</keyword>
<keyword id="KW-0645">Protease</keyword>
<keyword id="KW-0647">Proteasome</keyword>
<keyword id="KW-1185">Reference proteome</keyword>
<keyword id="KW-0888">Threonine protease</keyword>
<keyword id="KW-0865">Zymogen</keyword>
<evidence type="ECO:0000255" key="1">
    <source>
        <dbReference type="HAMAP-Rule" id="MF_02113"/>
    </source>
</evidence>
<feature type="propeptide" id="PRO_0000397366" description="Removed in mature form; by autocatalysis" evidence="1">
    <location>
        <begin position="1"/>
        <end position="7"/>
    </location>
</feature>
<feature type="chain" id="PRO_0000397367" description="Proteasome subunit beta">
    <location>
        <begin position="8"/>
        <end position="207"/>
    </location>
</feature>
<feature type="active site" description="Nucleophile" evidence="1">
    <location>
        <position position="8"/>
    </location>
</feature>
<reference key="1">
    <citation type="submission" date="2006-10" db="EMBL/GenBank/DDBJ databases">
        <title>Complete sequence of Methanosaeta thermophila PT.</title>
        <authorList>
            <consortium name="US DOE Joint Genome Institute"/>
            <person name="Copeland A."/>
            <person name="Lucas S."/>
            <person name="Lapidus A."/>
            <person name="Barry K."/>
            <person name="Detter J.C."/>
            <person name="Glavina del Rio T."/>
            <person name="Hammon N."/>
            <person name="Israni S."/>
            <person name="Pitluck S."/>
            <person name="Chain P."/>
            <person name="Malfatti S."/>
            <person name="Shin M."/>
            <person name="Vergez L."/>
            <person name="Schmutz J."/>
            <person name="Larimer F."/>
            <person name="Land M."/>
            <person name="Hauser L."/>
            <person name="Kyrpides N."/>
            <person name="Kim E."/>
            <person name="Smith K.S."/>
            <person name="Ingram-Smith C."/>
            <person name="Richardson P."/>
        </authorList>
    </citation>
    <scope>NUCLEOTIDE SEQUENCE [LARGE SCALE GENOMIC DNA]</scope>
    <source>
        <strain>DSM 6194 / JCM 14653 / NBRC 101360 / PT</strain>
    </source>
</reference>
<protein>
    <recommendedName>
        <fullName evidence="1">Proteasome subunit beta</fullName>
        <ecNumber evidence="1">3.4.25.1</ecNumber>
    </recommendedName>
    <alternativeName>
        <fullName evidence="1">20S proteasome beta subunit</fullName>
    </alternativeName>
    <alternativeName>
        <fullName evidence="1">Proteasome core protein PsmB</fullName>
    </alternativeName>
</protein>
<organism>
    <name type="scientific">Methanothrix thermoacetophila (strain DSM 6194 / JCM 14653 / NBRC 101360 / PT)</name>
    <name type="common">Methanosaeta thermophila</name>
    <dbReference type="NCBI Taxonomy" id="349307"/>
    <lineage>
        <taxon>Archaea</taxon>
        <taxon>Methanobacteriati</taxon>
        <taxon>Methanobacteriota</taxon>
        <taxon>Stenosarchaea group</taxon>
        <taxon>Methanomicrobia</taxon>
        <taxon>Methanotrichales</taxon>
        <taxon>Methanotrichaceae</taxon>
        <taxon>Methanothrix</taxon>
    </lineage>
</organism>
<proteinExistence type="inferred from homology"/>
<dbReference type="EC" id="3.4.25.1" evidence="1"/>
<dbReference type="EMBL" id="CP000477">
    <property type="protein sequence ID" value="ABK13885.1"/>
    <property type="molecule type" value="Genomic_DNA"/>
</dbReference>
<dbReference type="RefSeq" id="WP_011695284.1">
    <property type="nucleotide sequence ID" value="NC_008553.1"/>
</dbReference>
<dbReference type="SMR" id="A0B5B1"/>
<dbReference type="STRING" id="349307.Mthe_0083"/>
<dbReference type="MEROPS" id="T01.002"/>
<dbReference type="GeneID" id="4463363"/>
<dbReference type="KEGG" id="mtp:Mthe_0083"/>
<dbReference type="HOGENOM" id="CLU_035750_7_2_2"/>
<dbReference type="OrthoDB" id="6330at2157"/>
<dbReference type="Proteomes" id="UP000000674">
    <property type="component" value="Chromosome"/>
</dbReference>
<dbReference type="GO" id="GO:0005737">
    <property type="term" value="C:cytoplasm"/>
    <property type="evidence" value="ECO:0007669"/>
    <property type="project" value="UniProtKB-SubCell"/>
</dbReference>
<dbReference type="GO" id="GO:0019774">
    <property type="term" value="C:proteasome core complex, beta-subunit complex"/>
    <property type="evidence" value="ECO:0007669"/>
    <property type="project" value="UniProtKB-UniRule"/>
</dbReference>
<dbReference type="GO" id="GO:0004298">
    <property type="term" value="F:threonine-type endopeptidase activity"/>
    <property type="evidence" value="ECO:0007669"/>
    <property type="project" value="UniProtKB-UniRule"/>
</dbReference>
<dbReference type="GO" id="GO:0010498">
    <property type="term" value="P:proteasomal protein catabolic process"/>
    <property type="evidence" value="ECO:0007669"/>
    <property type="project" value="UniProtKB-UniRule"/>
</dbReference>
<dbReference type="CDD" id="cd03764">
    <property type="entry name" value="proteasome_beta_archeal"/>
    <property type="match status" value="1"/>
</dbReference>
<dbReference type="FunFam" id="3.60.20.10:FF:000049">
    <property type="entry name" value="Proteasome subunit beta"/>
    <property type="match status" value="1"/>
</dbReference>
<dbReference type="Gene3D" id="3.60.20.10">
    <property type="entry name" value="Glutamine Phosphoribosylpyrophosphate, subunit 1, domain 1"/>
    <property type="match status" value="1"/>
</dbReference>
<dbReference type="HAMAP" id="MF_02113_A">
    <property type="entry name" value="Proteasome_B_A"/>
    <property type="match status" value="1"/>
</dbReference>
<dbReference type="InterPro" id="IPR029055">
    <property type="entry name" value="Ntn_hydrolases_N"/>
</dbReference>
<dbReference type="InterPro" id="IPR019983">
    <property type="entry name" value="Pept_T1A_Psome_bsu_arc"/>
</dbReference>
<dbReference type="InterPro" id="IPR000243">
    <property type="entry name" value="Pept_T1A_subB"/>
</dbReference>
<dbReference type="InterPro" id="IPR016050">
    <property type="entry name" value="Proteasome_bsu_CS"/>
</dbReference>
<dbReference type="InterPro" id="IPR001353">
    <property type="entry name" value="Proteasome_sua/b"/>
</dbReference>
<dbReference type="InterPro" id="IPR023333">
    <property type="entry name" value="Proteasome_suB-type"/>
</dbReference>
<dbReference type="NCBIfam" id="TIGR03634">
    <property type="entry name" value="arc_protsome_B"/>
    <property type="match status" value="1"/>
</dbReference>
<dbReference type="PANTHER" id="PTHR32194:SF0">
    <property type="entry name" value="ATP-DEPENDENT PROTEASE SUBUNIT HSLV"/>
    <property type="match status" value="1"/>
</dbReference>
<dbReference type="PANTHER" id="PTHR32194">
    <property type="entry name" value="METALLOPROTEASE TLDD"/>
    <property type="match status" value="1"/>
</dbReference>
<dbReference type="Pfam" id="PF00227">
    <property type="entry name" value="Proteasome"/>
    <property type="match status" value="1"/>
</dbReference>
<dbReference type="PRINTS" id="PR00141">
    <property type="entry name" value="PROTEASOME"/>
</dbReference>
<dbReference type="SUPFAM" id="SSF56235">
    <property type="entry name" value="N-terminal nucleophile aminohydrolases (Ntn hydrolases)"/>
    <property type="match status" value="1"/>
</dbReference>
<dbReference type="PROSITE" id="PS00854">
    <property type="entry name" value="PROTEASOME_BETA_1"/>
    <property type="match status" value="1"/>
</dbReference>
<dbReference type="PROSITE" id="PS51476">
    <property type="entry name" value="PROTEASOME_BETA_2"/>
    <property type="match status" value="1"/>
</dbReference>
<comment type="function">
    <text evidence="1">Component of the proteasome core, a large protease complex with broad specificity involved in protein degradation.</text>
</comment>
<comment type="catalytic activity">
    <reaction evidence="1">
        <text>Cleavage of peptide bonds with very broad specificity.</text>
        <dbReference type="EC" id="3.4.25.1"/>
    </reaction>
</comment>
<comment type="activity regulation">
    <text evidence="1">The formation of the proteasomal ATPase PAN-20S proteasome complex, via the docking of the C-termini of PAN into the intersubunit pockets in the alpha-rings, triggers opening of the gate for substrate entry. Interconversion between the open-gate and close-gate conformations leads to a dynamic regulation of the 20S proteasome proteolysis activity.</text>
</comment>
<comment type="subunit">
    <text evidence="1">The 20S proteasome core is composed of 14 alpha and 14 beta subunits that assemble into four stacked heptameric rings, resulting in a barrel-shaped structure. The two inner rings, each composed of seven catalytic beta subunits, are sandwiched by two outer rings, each composed of seven alpha subunits. The catalytic chamber with the active sites is on the inside of the barrel. Has a gated structure, the ends of the cylinder being occluded by the N-termini of the alpha-subunits. Is capped at one or both ends by the proteasome regulatory ATPase, PAN.</text>
</comment>
<comment type="subcellular location">
    <subcellularLocation>
        <location evidence="1">Cytoplasm</location>
    </subcellularLocation>
</comment>
<comment type="similarity">
    <text evidence="1">Belongs to the peptidase T1B family.</text>
</comment>
<accession>A0B5B1</accession>
<sequence length="207" mass="22094">MVEAFKGTTTVGIVCDGGVVLASESRATMGSFIASRTAKKIYQIDDLVGLTTAGVVGDAQALVRMIQAEARLYRMQRGEPLTIKAITSLLSNILSARRYFPFLVQLVVGGVDKMGPKIFSLDALGGQIEEHDIVSTGSGSPIAYGVLESLYKPGLSIQDGSVLCVRAVHTAMKRDSASGNGIALVRITKDRYEEVPTSEVEEIVRSL</sequence>
<gene>
    <name evidence="1" type="primary">psmB</name>
    <name type="ordered locus">Mthe_0083</name>
</gene>